<feature type="chain" id="PRO_0000436085" description="Protein MARD1">
    <location>
        <begin position="1"/>
        <end position="263"/>
    </location>
</feature>
<feature type="zinc finger region" description="FLZ-type" evidence="1">
    <location>
        <begin position="219"/>
        <end position="263"/>
    </location>
</feature>
<feature type="sequence conflict" description="In Ref. 2; AAK92226 and 6; AAM65522." evidence="14" ref="2 6">
    <original>N</original>
    <variation>D</variation>
    <location>
        <position position="30"/>
    </location>
</feature>
<feature type="sequence conflict" description="In Ref. 6; AAM65522." evidence="14" ref="6">
    <original>P</original>
    <variation>R</variation>
    <location>
        <position position="208"/>
    </location>
</feature>
<sequence>MLRNKPRAAVTTKKQTSLLMADQPPPPKPNTCHCSPSLFSSPKFRFFTSKMMMTPFDSDFSLVSPTSILEANPSIFSSKNPKPVSYFEPTIPNPQRFHSPDVFGLADLVKDGDSNRDHSRKPVNKMVLFGSKLRVQIPSSADFGTKTGIRYPPCQLSPCVQTKVLAVSEIDQTEDYTRVISHGPNPTITHIFDNSVFVEATPCSVPLPQPAMETKSTESFLSRCFTCKKNLDQKQDIYIYRGEKGFCSSECRYQEMLLDQMET</sequence>
<keyword id="KW-0963">Cytoplasm</keyword>
<keyword id="KW-0479">Metal-binding</keyword>
<keyword id="KW-1185">Reference proteome</keyword>
<keyword id="KW-0862">Zinc</keyword>
<keyword id="KW-0863">Zinc-finger</keyword>
<accession>Q8LGS1</accession>
<accession>Q8LA86</accession>
<accession>Q8VZ84</accession>
<accession>Q9M1W8</accession>
<comment type="function">
    <text evidence="3 5">May act as an adapter to facilitate the interaction of SnRK1 complex with effector proteins, conferring tissue- and stimulus-type specific differences in the SnRK1 regulation pathway (PubMed:24600465). Involved in seed dormancy control (PubMed:15159630).</text>
</comment>
<comment type="subunit">
    <text evidence="5 7 8 9">Interacts with KIN10 and KIN11 via its FLZ-type zinc finger domain (PubMed:24600465, PubMed:29945970, Ref.12). Interacts with KINB1 and KINB2 via its N-terminal part (PubMed:29945970). Interacts with TZF4, TZF5 and TZF6 (PubMed:26978070). Interacts with MPK3 and MPK6 (Ref.12).</text>
</comment>
<comment type="interaction">
    <interactant intactId="EBI-4443654">
        <id>Q8LGS1</id>
    </interactant>
    <interactant intactId="EBI-1238932">
        <id>Q39021</id>
        <label>MPK1</label>
    </interactant>
    <organismsDiffer>false</organismsDiffer>
    <experiments>5</experiments>
</comment>
<comment type="interaction">
    <interactant intactId="EBI-4443654">
        <id>Q8LGS1</id>
    </interactant>
    <interactant intactId="EBI-349526">
        <id>Q39023</id>
        <label>MPK3</label>
    </interactant>
    <organismsDiffer>false</organismsDiffer>
    <experiments>4</experiments>
</comment>
<comment type="subcellular location">
    <subcellularLocation>
        <location evidence="7">Cytoplasm</location>
        <location evidence="7">Stress granule</location>
    </subcellularLocation>
    <subcellularLocation>
        <location evidence="7 8">Cytoplasm</location>
        <location evidence="7 8">P-body</location>
    </subcellularLocation>
</comment>
<comment type="developmental stage">
    <text evidence="2">Expressed at very low levels during early stages of leaf development, but up-regulated during leaf senescence.</text>
</comment>
<comment type="induction">
    <text evidence="2 3 4 6">Up-regulated by abscisic acid (PubMed:11402199, PubMed:15159630). Down-regulated by the transcription factor ERF114 (PubMed:23616605). Down-regulated by glucose, sucrose and mannose (PubMed:26442059). Induced by abscissic acid (ABA) (PubMed:26442059).</text>
</comment>
<comment type="disruption phenotype">
    <text evidence="3">No visible phenotype, but reduced dormancy and fast germination of the seeds. Strong resistance of the seeds to abscisic acid.</text>
</comment>
<comment type="similarity">
    <text evidence="14">Belongs to the FLZ family.</text>
</comment>
<comment type="sequence caution" evidence="14">
    <conflict type="erroneous initiation">
        <sequence resource="EMBL-CDS" id="AAM65522"/>
    </conflict>
    <text>Truncated N-terminus.</text>
</comment>
<comment type="sequence caution" evidence="14">
    <conflict type="erroneous initiation">
        <sequence resource="EMBL-CDS" id="CAB86422"/>
    </conflict>
    <text>Truncated N-terminus.</text>
</comment>
<proteinExistence type="evidence at protein level"/>
<evidence type="ECO:0000255" key="1">
    <source>
        <dbReference type="PROSITE-ProRule" id="PRU01131"/>
    </source>
</evidence>
<evidence type="ECO:0000269" key="2">
    <source>
    </source>
</evidence>
<evidence type="ECO:0000269" key="3">
    <source>
    </source>
</evidence>
<evidence type="ECO:0000269" key="4">
    <source>
    </source>
</evidence>
<evidence type="ECO:0000269" key="5">
    <source>
    </source>
</evidence>
<evidence type="ECO:0000269" key="6">
    <source>
    </source>
</evidence>
<evidence type="ECO:0000269" key="7">
    <source>
    </source>
</evidence>
<evidence type="ECO:0000269" key="8">
    <source>
    </source>
</evidence>
<evidence type="ECO:0000269" key="9">
    <source ref="12"/>
</evidence>
<evidence type="ECO:0000303" key="10">
    <source>
    </source>
</evidence>
<evidence type="ECO:0000303" key="11">
    <source>
    </source>
</evidence>
<evidence type="ECO:0000303" key="12">
    <source>
    </source>
</evidence>
<evidence type="ECO:0000303" key="13">
    <source>
    </source>
</evidence>
<evidence type="ECO:0000305" key="14"/>
<evidence type="ECO:0000312" key="15">
    <source>
        <dbReference type="Araport" id="AT3G63210"/>
    </source>
</evidence>
<evidence type="ECO:0000312" key="16">
    <source>
        <dbReference type="EMBL" id="AAL38351.1"/>
    </source>
</evidence>
<organism>
    <name type="scientific">Arabidopsis thaliana</name>
    <name type="common">Mouse-ear cress</name>
    <dbReference type="NCBI Taxonomy" id="3702"/>
    <lineage>
        <taxon>Eukaryota</taxon>
        <taxon>Viridiplantae</taxon>
        <taxon>Streptophyta</taxon>
        <taxon>Embryophyta</taxon>
        <taxon>Tracheophyta</taxon>
        <taxon>Spermatophyta</taxon>
        <taxon>Magnoliopsida</taxon>
        <taxon>eudicotyledons</taxon>
        <taxon>Gunneridae</taxon>
        <taxon>Pentapetalae</taxon>
        <taxon>rosids</taxon>
        <taxon>malvids</taxon>
        <taxon>Brassicales</taxon>
        <taxon>Brassicaceae</taxon>
        <taxon>Camelineae</taxon>
        <taxon>Arabidopsis</taxon>
    </lineage>
</organism>
<name>MARD1_ARATH</name>
<gene>
    <name evidence="11" type="primary">MARD1</name>
    <name evidence="12" type="synonym">DUF581-19</name>
    <name evidence="13" type="synonym">FLZ9</name>
    <name evidence="10" type="synonym">SAG102</name>
    <name evidence="15" type="ordered locus">At3g63210</name>
    <name evidence="16" type="ORF">F16M2.6</name>
</gene>
<protein>
    <recommendedName>
        <fullName evidence="11">Protein MARD1</fullName>
    </recommendedName>
    <alternativeName>
        <fullName evidence="13">FCS-Like Zinc finger 9</fullName>
    </alternativeName>
    <alternativeName>
        <fullName evidence="11">Mediator of ABA-regulated dormancy1</fullName>
    </alternativeName>
    <alternativeName>
        <fullName evidence="10">Senescence-associated protein SAG102</fullName>
    </alternativeName>
</protein>
<dbReference type="EMBL" id="AY043289">
    <property type="protein sequence ID" value="AAK92226.1"/>
    <property type="molecule type" value="mRNA"/>
</dbReference>
<dbReference type="EMBL" id="AL138648">
    <property type="protein sequence ID" value="CAB86422.1"/>
    <property type="status" value="ALT_INIT"/>
    <property type="molecule type" value="Genomic_DNA"/>
</dbReference>
<dbReference type="EMBL" id="CP002686">
    <property type="protein sequence ID" value="AEE80448.1"/>
    <property type="molecule type" value="Genomic_DNA"/>
</dbReference>
<dbReference type="EMBL" id="AY065175">
    <property type="protein sequence ID" value="AAL38351.1"/>
    <property type="molecule type" value="mRNA"/>
</dbReference>
<dbReference type="EMBL" id="AY081561">
    <property type="protein sequence ID" value="AAM10123.1"/>
    <property type="molecule type" value="mRNA"/>
</dbReference>
<dbReference type="EMBL" id="AY087975">
    <property type="protein sequence ID" value="AAM65522.1"/>
    <property type="status" value="ALT_INIT"/>
    <property type="molecule type" value="mRNA"/>
</dbReference>
<dbReference type="PIR" id="T48110">
    <property type="entry name" value="T48110"/>
</dbReference>
<dbReference type="RefSeq" id="NP_567143.1">
    <property type="nucleotide sequence ID" value="NM_116186.4"/>
</dbReference>
<dbReference type="FunCoup" id="Q8LGS1">
    <property type="interactions" value="2"/>
</dbReference>
<dbReference type="IntAct" id="Q8LGS1">
    <property type="interactions" value="11"/>
</dbReference>
<dbReference type="STRING" id="3702.Q8LGS1"/>
<dbReference type="PaxDb" id="3702-AT3G63210.1"/>
<dbReference type="ProteomicsDB" id="238514"/>
<dbReference type="EnsemblPlants" id="AT3G63210.1">
    <property type="protein sequence ID" value="AT3G63210.1"/>
    <property type="gene ID" value="AT3G63210"/>
</dbReference>
<dbReference type="GeneID" id="825496"/>
<dbReference type="Gramene" id="AT3G63210.1">
    <property type="protein sequence ID" value="AT3G63210.1"/>
    <property type="gene ID" value="AT3G63210"/>
</dbReference>
<dbReference type="KEGG" id="ath:AT3G63210"/>
<dbReference type="Araport" id="AT3G63210"/>
<dbReference type="TAIR" id="AT3G63210">
    <property type="gene designation" value="MARD1"/>
</dbReference>
<dbReference type="eggNOG" id="ENOG502QS8T">
    <property type="taxonomic scope" value="Eukaryota"/>
</dbReference>
<dbReference type="InParanoid" id="Q8LGS1"/>
<dbReference type="OMA" id="VLDEPRC"/>
<dbReference type="OrthoDB" id="1902692at2759"/>
<dbReference type="PhylomeDB" id="Q8LGS1"/>
<dbReference type="CD-CODE" id="24475C75">
    <property type="entry name" value="Stress granule"/>
</dbReference>
<dbReference type="CD-CODE" id="60F64496">
    <property type="entry name" value="P-body"/>
</dbReference>
<dbReference type="PRO" id="PR:Q8LGS1"/>
<dbReference type="Proteomes" id="UP000006548">
    <property type="component" value="Chromosome 3"/>
</dbReference>
<dbReference type="ExpressionAtlas" id="Q8LGS1">
    <property type="expression patterns" value="baseline and differential"/>
</dbReference>
<dbReference type="GO" id="GO:0010494">
    <property type="term" value="C:cytoplasmic stress granule"/>
    <property type="evidence" value="ECO:0000314"/>
    <property type="project" value="TAIR"/>
</dbReference>
<dbReference type="GO" id="GO:0005634">
    <property type="term" value="C:nucleus"/>
    <property type="evidence" value="ECO:0000314"/>
    <property type="project" value="UniProtKB"/>
</dbReference>
<dbReference type="GO" id="GO:0000932">
    <property type="term" value="C:P-body"/>
    <property type="evidence" value="ECO:0000314"/>
    <property type="project" value="UniProtKB"/>
</dbReference>
<dbReference type="GO" id="GO:0019900">
    <property type="term" value="F:kinase binding"/>
    <property type="evidence" value="ECO:0000353"/>
    <property type="project" value="UniProtKB"/>
</dbReference>
<dbReference type="GO" id="GO:0008270">
    <property type="term" value="F:zinc ion binding"/>
    <property type="evidence" value="ECO:0007669"/>
    <property type="project" value="UniProtKB-KW"/>
</dbReference>
<dbReference type="GO" id="GO:0009737">
    <property type="term" value="P:response to abscisic acid"/>
    <property type="evidence" value="ECO:0000315"/>
    <property type="project" value="TAIR"/>
</dbReference>
<dbReference type="GO" id="GO:0009749">
    <property type="term" value="P:response to glucose"/>
    <property type="evidence" value="ECO:0000270"/>
    <property type="project" value="UniProtKB"/>
</dbReference>
<dbReference type="GO" id="GO:1905582">
    <property type="term" value="P:response to mannose"/>
    <property type="evidence" value="ECO:0000270"/>
    <property type="project" value="UniProtKB"/>
</dbReference>
<dbReference type="GO" id="GO:0009744">
    <property type="term" value="P:response to sucrose"/>
    <property type="evidence" value="ECO:0000270"/>
    <property type="project" value="UniProtKB"/>
</dbReference>
<dbReference type="GO" id="GO:0010162">
    <property type="term" value="P:seed dormancy process"/>
    <property type="evidence" value="ECO:0000315"/>
    <property type="project" value="TAIR"/>
</dbReference>
<dbReference type="InterPro" id="IPR044593">
    <property type="entry name" value="FLZ8/MARD1"/>
</dbReference>
<dbReference type="InterPro" id="IPR007650">
    <property type="entry name" value="Zf-FLZ_dom"/>
</dbReference>
<dbReference type="PANTHER" id="PTHR46443">
    <property type="entry name" value="FCS-LIKE ZINC FINGER 8"/>
    <property type="match status" value="1"/>
</dbReference>
<dbReference type="PANTHER" id="PTHR46443:SF3">
    <property type="entry name" value="PROTEIN MARD1"/>
    <property type="match status" value="1"/>
</dbReference>
<dbReference type="Pfam" id="PF04570">
    <property type="entry name" value="zf-FLZ"/>
    <property type="match status" value="1"/>
</dbReference>
<dbReference type="PROSITE" id="PS51795">
    <property type="entry name" value="ZF_FLZ"/>
    <property type="match status" value="1"/>
</dbReference>
<reference key="1">
    <citation type="journal article" date="2001" name="Plant Physiol.">
        <title>Networking senescence-regulating pathways by using Arabidopsis enhancer trap lines.</title>
        <authorList>
            <person name="He Y."/>
            <person name="Tang W."/>
            <person name="Swain J.D."/>
            <person name="Green A.L."/>
            <person name="Jack T.P."/>
            <person name="Gan S."/>
        </authorList>
    </citation>
    <scope>NUCLEOTIDE SEQUENCE [GENOMIC DNA]</scope>
    <scope>DEVELOPMENTAL STAGE</scope>
    <scope>INDUCTION BY ABSCISIC ACID</scope>
</reference>
<reference key="2">
    <citation type="journal article" date="2004" name="Plant Mol. Biol.">
        <title>A novel zinc-finger protein with a proline-rich domain mediates ABA-regulated seed dormancy in Arabidopsis.</title>
        <authorList>
            <person name="He Y."/>
            <person name="Gan S."/>
        </authorList>
    </citation>
    <scope>NUCLEOTIDE SEQUENCE [MRNA]</scope>
    <scope>FUNCTION</scope>
    <scope>DISRUPTION PHENOTYPE</scope>
    <scope>INDUCTION BY ABSCISIC ACID</scope>
</reference>
<reference key="3">
    <citation type="journal article" date="2000" name="Nature">
        <title>Sequence and analysis of chromosome 3 of the plant Arabidopsis thaliana.</title>
        <authorList>
            <person name="Salanoubat M."/>
            <person name="Lemcke K."/>
            <person name="Rieger M."/>
            <person name="Ansorge W."/>
            <person name="Unseld M."/>
            <person name="Fartmann B."/>
            <person name="Valle G."/>
            <person name="Bloecker H."/>
            <person name="Perez-Alonso M."/>
            <person name="Obermaier B."/>
            <person name="Delseny M."/>
            <person name="Boutry M."/>
            <person name="Grivell L.A."/>
            <person name="Mache R."/>
            <person name="Puigdomenech P."/>
            <person name="De Simone V."/>
            <person name="Choisne N."/>
            <person name="Artiguenave F."/>
            <person name="Robert C."/>
            <person name="Brottier P."/>
            <person name="Wincker P."/>
            <person name="Cattolico L."/>
            <person name="Weissenbach J."/>
            <person name="Saurin W."/>
            <person name="Quetier F."/>
            <person name="Schaefer M."/>
            <person name="Mueller-Auer S."/>
            <person name="Gabel C."/>
            <person name="Fuchs M."/>
            <person name="Benes V."/>
            <person name="Wurmbach E."/>
            <person name="Drzonek H."/>
            <person name="Erfle H."/>
            <person name="Jordan N."/>
            <person name="Bangert S."/>
            <person name="Wiedelmann R."/>
            <person name="Kranz H."/>
            <person name="Voss H."/>
            <person name="Holland R."/>
            <person name="Brandt P."/>
            <person name="Nyakatura G."/>
            <person name="Vezzi A."/>
            <person name="D'Angelo M."/>
            <person name="Pallavicini A."/>
            <person name="Toppo S."/>
            <person name="Simionati B."/>
            <person name="Conrad A."/>
            <person name="Hornischer K."/>
            <person name="Kauer G."/>
            <person name="Loehnert T.-H."/>
            <person name="Nordsiek G."/>
            <person name="Reichelt J."/>
            <person name="Scharfe M."/>
            <person name="Schoen O."/>
            <person name="Bargues M."/>
            <person name="Terol J."/>
            <person name="Climent J."/>
            <person name="Navarro P."/>
            <person name="Collado C."/>
            <person name="Perez-Perez A."/>
            <person name="Ottenwaelder B."/>
            <person name="Duchemin D."/>
            <person name="Cooke R."/>
            <person name="Laudie M."/>
            <person name="Berger-Llauro C."/>
            <person name="Purnelle B."/>
            <person name="Masuy D."/>
            <person name="de Haan M."/>
            <person name="Maarse A.C."/>
            <person name="Alcaraz J.-P."/>
            <person name="Cottet A."/>
            <person name="Casacuberta E."/>
            <person name="Monfort A."/>
            <person name="Argiriou A."/>
            <person name="Flores M."/>
            <person name="Liguori R."/>
            <person name="Vitale D."/>
            <person name="Mannhaupt G."/>
            <person name="Haase D."/>
            <person name="Schoof H."/>
            <person name="Rudd S."/>
            <person name="Zaccaria P."/>
            <person name="Mewes H.-W."/>
            <person name="Mayer K.F.X."/>
            <person name="Kaul S."/>
            <person name="Town C.D."/>
            <person name="Koo H.L."/>
            <person name="Tallon L.J."/>
            <person name="Jenkins J."/>
            <person name="Rooney T."/>
            <person name="Rizzo M."/>
            <person name="Walts A."/>
            <person name="Utterback T."/>
            <person name="Fujii C.Y."/>
            <person name="Shea T.P."/>
            <person name="Creasy T.H."/>
            <person name="Haas B."/>
            <person name="Maiti R."/>
            <person name="Wu D."/>
            <person name="Peterson J."/>
            <person name="Van Aken S."/>
            <person name="Pai G."/>
            <person name="Militscher J."/>
            <person name="Sellers P."/>
            <person name="Gill J.E."/>
            <person name="Feldblyum T.V."/>
            <person name="Preuss D."/>
            <person name="Lin X."/>
            <person name="Nierman W.C."/>
            <person name="Salzberg S.L."/>
            <person name="White O."/>
            <person name="Venter J.C."/>
            <person name="Fraser C.M."/>
            <person name="Kaneko T."/>
            <person name="Nakamura Y."/>
            <person name="Sato S."/>
            <person name="Kato T."/>
            <person name="Asamizu E."/>
            <person name="Sasamoto S."/>
            <person name="Kimura T."/>
            <person name="Idesawa K."/>
            <person name="Kawashima K."/>
            <person name="Kishida Y."/>
            <person name="Kiyokawa C."/>
            <person name="Kohara M."/>
            <person name="Matsumoto M."/>
            <person name="Matsuno A."/>
            <person name="Muraki A."/>
            <person name="Nakayama S."/>
            <person name="Nakazaki N."/>
            <person name="Shinpo S."/>
            <person name="Takeuchi C."/>
            <person name="Wada T."/>
            <person name="Watanabe A."/>
            <person name="Yamada M."/>
            <person name="Yasuda M."/>
            <person name="Tabata S."/>
        </authorList>
    </citation>
    <scope>NUCLEOTIDE SEQUENCE [LARGE SCALE GENOMIC DNA]</scope>
    <source>
        <strain>cv. Columbia</strain>
    </source>
</reference>
<reference key="4">
    <citation type="journal article" date="2017" name="Plant J.">
        <title>Araport11: a complete reannotation of the Arabidopsis thaliana reference genome.</title>
        <authorList>
            <person name="Cheng C.Y."/>
            <person name="Krishnakumar V."/>
            <person name="Chan A.P."/>
            <person name="Thibaud-Nissen F."/>
            <person name="Schobel S."/>
            <person name="Town C.D."/>
        </authorList>
    </citation>
    <scope>GENOME REANNOTATION</scope>
    <source>
        <strain>cv. Columbia</strain>
    </source>
</reference>
<reference key="5">
    <citation type="journal article" date="2003" name="Science">
        <title>Empirical analysis of transcriptional activity in the Arabidopsis genome.</title>
        <authorList>
            <person name="Yamada K."/>
            <person name="Lim J."/>
            <person name="Dale J.M."/>
            <person name="Chen H."/>
            <person name="Shinn P."/>
            <person name="Palm C.J."/>
            <person name="Southwick A.M."/>
            <person name="Wu H.C."/>
            <person name="Kim C.J."/>
            <person name="Nguyen M."/>
            <person name="Pham P.K."/>
            <person name="Cheuk R.F."/>
            <person name="Karlin-Newmann G."/>
            <person name="Liu S.X."/>
            <person name="Lam B."/>
            <person name="Sakano H."/>
            <person name="Wu T."/>
            <person name="Yu G."/>
            <person name="Miranda M."/>
            <person name="Quach H.L."/>
            <person name="Tripp M."/>
            <person name="Chang C.H."/>
            <person name="Lee J.M."/>
            <person name="Toriumi M.J."/>
            <person name="Chan M.M."/>
            <person name="Tang C.C."/>
            <person name="Onodera C.S."/>
            <person name="Deng J.M."/>
            <person name="Akiyama K."/>
            <person name="Ansari Y."/>
            <person name="Arakawa T."/>
            <person name="Banh J."/>
            <person name="Banno F."/>
            <person name="Bowser L."/>
            <person name="Brooks S.Y."/>
            <person name="Carninci P."/>
            <person name="Chao Q."/>
            <person name="Choy N."/>
            <person name="Enju A."/>
            <person name="Goldsmith A.D."/>
            <person name="Gurjal M."/>
            <person name="Hansen N.F."/>
            <person name="Hayashizaki Y."/>
            <person name="Johnson-Hopson C."/>
            <person name="Hsuan V.W."/>
            <person name="Iida K."/>
            <person name="Karnes M."/>
            <person name="Khan S."/>
            <person name="Koesema E."/>
            <person name="Ishida J."/>
            <person name="Jiang P.X."/>
            <person name="Jones T."/>
            <person name="Kawai J."/>
            <person name="Kamiya A."/>
            <person name="Meyers C."/>
            <person name="Nakajima M."/>
            <person name="Narusaka M."/>
            <person name="Seki M."/>
            <person name="Sakurai T."/>
            <person name="Satou M."/>
            <person name="Tamse R."/>
            <person name="Vaysberg M."/>
            <person name="Wallender E.K."/>
            <person name="Wong C."/>
            <person name="Yamamura Y."/>
            <person name="Yuan S."/>
            <person name="Shinozaki K."/>
            <person name="Davis R.W."/>
            <person name="Theologis A."/>
            <person name="Ecker J.R."/>
        </authorList>
    </citation>
    <scope>NUCLEOTIDE SEQUENCE [LARGE SCALE MRNA]</scope>
    <source>
        <strain>cv. Columbia</strain>
    </source>
</reference>
<reference key="6">
    <citation type="submission" date="2002-03" db="EMBL/GenBank/DDBJ databases">
        <title>Full-length cDNA from Arabidopsis thaliana.</title>
        <authorList>
            <person name="Brover V.V."/>
            <person name="Troukhan M.E."/>
            <person name="Alexandrov N.A."/>
            <person name="Lu Y.-P."/>
            <person name="Flavell R.B."/>
            <person name="Feldmann K.A."/>
        </authorList>
    </citation>
    <scope>NUCLEOTIDE SEQUENCE [LARGE SCALE MRNA]</scope>
</reference>
<reference key="7">
    <citation type="journal article" date="2013" name="Plant Physiol.">
        <title>EBE, an AP2/ERF transcription factor highly expressed in proliferating cells, affects shoot architecture in Arabidopsis.</title>
        <authorList>
            <person name="Mehrnia M."/>
            <person name="Balazadeh S."/>
            <person name="Zanor M.I."/>
            <person name="Mueller-Roeber B."/>
        </authorList>
    </citation>
    <scope>INDUCTION BY ERF114</scope>
</reference>
<reference key="8">
    <citation type="journal article" date="2014" name="Front. Plant Sci.">
        <title>The complex becomes more complex: protein-protein interactions of SnRK1 with DUF581 family proteins provide a framework for cell- and stimulus type-specific SnRK1 signaling in plants.</title>
        <authorList>
            <person name="Nietzsche M."/>
            <person name="Schiessl I."/>
            <person name="Boernke F."/>
        </authorList>
    </citation>
    <scope>GENE FAMILY</scope>
    <scope>INTERACTION WITH KIN10 AND KIN11</scope>
    <scope>FUNCTION</scope>
</reference>
<reference key="9">
    <citation type="journal article" date="2014" name="Front. Plant Sci.">
        <title>Corrigendum: The complex becomes more complex: protein-protein interactions of SnRK1 with DUF581 family proteins provide a framework for cell- and stimulus type-specific SnRK1 signaling in plants.</title>
        <authorList>
            <person name="Boernke F."/>
        </authorList>
    </citation>
    <scope>ERRATUM OF PUBMED:24600465</scope>
</reference>
<reference key="10">
    <citation type="journal article" date="2014" name="PLoS ONE">
        <title>DUF581 is plant specific FCS-like zinc finger involved in protein-protein interaction.</title>
        <authorList>
            <person name="Jamsheer K M."/>
            <person name="Laxmi A."/>
        </authorList>
    </citation>
    <scope>GENE FAMILY</scope>
    <scope>NOMENCLATURE</scope>
</reference>
<reference key="11">
    <citation type="journal article" date="2015" name="Front. Plant Sci.">
        <title>Expression of Arabidopsis FCS-Like Zinc finger genes is differentially regulated by sugars, cellular energy level, and abiotic stress.</title>
        <authorList>
            <person name="Jamsheer K M."/>
            <person name="Laxmi A."/>
        </authorList>
    </citation>
    <scope>INDUCTION</scope>
</reference>
<reference key="12">
    <citation type="journal article" date="2016" name="Curr. Plant Biol.">
        <title>A protein-protein interaction network linking the energy-sensor kinase SnRK1 to multiple signaling pathways in Arabidopsis thaliana.</title>
        <authorList>
            <person name="Nietzsche M."/>
            <person name="Landgraf R."/>
            <person name="Tohge T."/>
            <person name="Boernke F."/>
        </authorList>
    </citation>
    <scope>INTERACTION WITH KIN10; KIN11; MPK3 AND MPK6</scope>
</reference>
<reference key="13">
    <citation type="journal article" date="2016" name="PLoS ONE">
        <title>Plant tandem CCCH zinc finger proteins interact with ABA, drought, and stress response regulators in processing-bodies and stress granules.</title>
        <authorList>
            <person name="Bogamuwa S."/>
            <person name="Jang J.C."/>
        </authorList>
    </citation>
    <scope>INTERACTION WITH TZF4; TZF5 AND TZF6</scope>
    <scope>SUBCELLULAR LOCATION</scope>
</reference>
<reference key="14">
    <citation type="journal article" date="2018" name="J. Biol. Chem.">
        <title>The FCS-like zinc finger scaffold of the kinase SnRK1 is formed by the coordinated actions of the FLZ domain and intrinsically disordered regions.</title>
        <authorList>
            <person name="Jamsheer K M."/>
            <person name="Shukla B.N."/>
            <person name="Jindal S."/>
            <person name="Gopan N."/>
            <person name="Mannully C.T."/>
            <person name="Laxmi A."/>
        </authorList>
    </citation>
    <scope>INTERACTION WITH KIN10; KIN11; KINB1 AND KINB2</scope>
    <scope>SUBCELLULAR LOCATION</scope>
</reference>